<dbReference type="EMBL" id="AC126281">
    <property type="status" value="NOT_ANNOTATED_CDS"/>
    <property type="molecule type" value="Genomic_DNA"/>
</dbReference>
<dbReference type="SMR" id="P0CJ90"/>
<dbReference type="FunCoup" id="P0CJ90">
    <property type="interactions" value="16"/>
</dbReference>
<dbReference type="IntAct" id="P0CJ90">
    <property type="interactions" value="1"/>
</dbReference>
<dbReference type="GlyGen" id="P0CJ90">
    <property type="glycosylation" value="1 site"/>
</dbReference>
<dbReference type="iPTMnet" id="P0CJ90"/>
<dbReference type="PhosphoSitePlus" id="P0CJ90"/>
<dbReference type="BioMuta" id="HGNC:37266"/>
<dbReference type="DMDM" id="325530037"/>
<dbReference type="MassIVE" id="P0CJ90"/>
<dbReference type="AGR" id="HGNC:37266"/>
<dbReference type="GeneCards" id="DUX4L7"/>
<dbReference type="HGNC" id="HGNC:37266">
    <property type="gene designation" value="DUX4L7"/>
</dbReference>
<dbReference type="neXtProt" id="NX_P0CJ90"/>
<dbReference type="InParanoid" id="P0CJ90"/>
<dbReference type="PAN-GO" id="P0CJ90">
    <property type="GO annotations" value="4 GO annotations based on evolutionary models"/>
</dbReference>
<dbReference type="PhylomeDB" id="P0CJ90"/>
<dbReference type="Pharos" id="P0CJ90">
    <property type="development level" value="Tdark"/>
</dbReference>
<dbReference type="PRO" id="PR:P0CJ90"/>
<dbReference type="Proteomes" id="UP000005640">
    <property type="component" value="Unplaced"/>
</dbReference>
<dbReference type="RNAct" id="P0CJ90">
    <property type="molecule type" value="protein"/>
</dbReference>
<dbReference type="GO" id="GO:0000785">
    <property type="term" value="C:chromatin"/>
    <property type="evidence" value="ECO:0000247"/>
    <property type="project" value="NTNU_SB"/>
</dbReference>
<dbReference type="GO" id="GO:0005634">
    <property type="term" value="C:nucleus"/>
    <property type="evidence" value="ECO:0000318"/>
    <property type="project" value="GO_Central"/>
</dbReference>
<dbReference type="GO" id="GO:0000981">
    <property type="term" value="F:DNA-binding transcription factor activity, RNA polymerase II-specific"/>
    <property type="evidence" value="ECO:0000247"/>
    <property type="project" value="NTNU_SB"/>
</dbReference>
<dbReference type="GO" id="GO:0000977">
    <property type="term" value="F:RNA polymerase II transcription regulatory region sequence-specific DNA binding"/>
    <property type="evidence" value="ECO:0000318"/>
    <property type="project" value="GO_Central"/>
</dbReference>
<dbReference type="GO" id="GO:0006357">
    <property type="term" value="P:regulation of transcription by RNA polymerase II"/>
    <property type="evidence" value="ECO:0000318"/>
    <property type="project" value="GO_Central"/>
</dbReference>
<dbReference type="CDD" id="cd00086">
    <property type="entry name" value="homeodomain"/>
    <property type="match status" value="2"/>
</dbReference>
<dbReference type="FunFam" id="1.10.10.60:FF:000325">
    <property type="entry name" value="Double homeobox protein 4"/>
    <property type="match status" value="1"/>
</dbReference>
<dbReference type="FunFam" id="1.10.10.60:FF:000354">
    <property type="entry name" value="Double homeobox protein 4"/>
    <property type="match status" value="1"/>
</dbReference>
<dbReference type="Gene3D" id="1.10.10.60">
    <property type="entry name" value="Homeodomain-like"/>
    <property type="match status" value="2"/>
</dbReference>
<dbReference type="InterPro" id="IPR001356">
    <property type="entry name" value="HD"/>
</dbReference>
<dbReference type="InterPro" id="IPR051306">
    <property type="entry name" value="Homeobox_regulator"/>
</dbReference>
<dbReference type="InterPro" id="IPR009057">
    <property type="entry name" value="Homeodomain-like_sf"/>
</dbReference>
<dbReference type="InterPro" id="IPR000047">
    <property type="entry name" value="HTH_motif"/>
</dbReference>
<dbReference type="PANTHER" id="PTHR46123:SF3">
    <property type="entry name" value="DOUBLE HOMEOBOX PROTEIN 1-RELATED"/>
    <property type="match status" value="1"/>
</dbReference>
<dbReference type="PANTHER" id="PTHR46123">
    <property type="entry name" value="MIX-TYPE HOMEOBOX GENE 1-RELATED"/>
    <property type="match status" value="1"/>
</dbReference>
<dbReference type="Pfam" id="PF00046">
    <property type="entry name" value="Homeodomain"/>
    <property type="match status" value="2"/>
</dbReference>
<dbReference type="PRINTS" id="PR00031">
    <property type="entry name" value="HTHREPRESSR"/>
</dbReference>
<dbReference type="SMART" id="SM00389">
    <property type="entry name" value="HOX"/>
    <property type="match status" value="2"/>
</dbReference>
<dbReference type="SUPFAM" id="SSF46689">
    <property type="entry name" value="Homeodomain-like"/>
    <property type="match status" value="2"/>
</dbReference>
<dbReference type="PROSITE" id="PS50071">
    <property type="entry name" value="HOMEOBOX_2"/>
    <property type="match status" value="2"/>
</dbReference>
<reference key="1">
    <citation type="journal article" date="2005" name="Nature">
        <title>Generation and annotation of the DNA sequences of human chromosomes 2 and 4.</title>
        <authorList>
            <person name="Hillier L.W."/>
            <person name="Graves T.A."/>
            <person name="Fulton R.S."/>
            <person name="Fulton L.A."/>
            <person name="Pepin K.H."/>
            <person name="Minx P."/>
            <person name="Wagner-McPherson C."/>
            <person name="Layman D."/>
            <person name="Wylie K."/>
            <person name="Sekhon M."/>
            <person name="Becker M.C."/>
            <person name="Fewell G.A."/>
            <person name="Delehaunty K.D."/>
            <person name="Miner T.L."/>
            <person name="Nash W.E."/>
            <person name="Kremitzki C."/>
            <person name="Oddy L."/>
            <person name="Du H."/>
            <person name="Sun H."/>
            <person name="Bradshaw-Cordum H."/>
            <person name="Ali J."/>
            <person name="Carter J."/>
            <person name="Cordes M."/>
            <person name="Harris A."/>
            <person name="Isak A."/>
            <person name="van Brunt A."/>
            <person name="Nguyen C."/>
            <person name="Du F."/>
            <person name="Courtney L."/>
            <person name="Kalicki J."/>
            <person name="Ozersky P."/>
            <person name="Abbott S."/>
            <person name="Armstrong J."/>
            <person name="Belter E.A."/>
            <person name="Caruso L."/>
            <person name="Cedroni M."/>
            <person name="Cotton M."/>
            <person name="Davidson T."/>
            <person name="Desai A."/>
            <person name="Elliott G."/>
            <person name="Erb T."/>
            <person name="Fronick C."/>
            <person name="Gaige T."/>
            <person name="Haakenson W."/>
            <person name="Haglund K."/>
            <person name="Holmes A."/>
            <person name="Harkins R."/>
            <person name="Kim K."/>
            <person name="Kruchowski S.S."/>
            <person name="Strong C.M."/>
            <person name="Grewal N."/>
            <person name="Goyea E."/>
            <person name="Hou S."/>
            <person name="Levy A."/>
            <person name="Martinka S."/>
            <person name="Mead K."/>
            <person name="McLellan M.D."/>
            <person name="Meyer R."/>
            <person name="Randall-Maher J."/>
            <person name="Tomlinson C."/>
            <person name="Dauphin-Kohlberg S."/>
            <person name="Kozlowicz-Reilly A."/>
            <person name="Shah N."/>
            <person name="Swearengen-Shahid S."/>
            <person name="Snider J."/>
            <person name="Strong J.T."/>
            <person name="Thompson J."/>
            <person name="Yoakum M."/>
            <person name="Leonard S."/>
            <person name="Pearman C."/>
            <person name="Trani L."/>
            <person name="Radionenko M."/>
            <person name="Waligorski J.E."/>
            <person name="Wang C."/>
            <person name="Rock S.M."/>
            <person name="Tin-Wollam A.-M."/>
            <person name="Maupin R."/>
            <person name="Latreille P."/>
            <person name="Wendl M.C."/>
            <person name="Yang S.-P."/>
            <person name="Pohl C."/>
            <person name="Wallis J.W."/>
            <person name="Spieth J."/>
            <person name="Bieri T.A."/>
            <person name="Berkowicz N."/>
            <person name="Nelson J.O."/>
            <person name="Osborne J."/>
            <person name="Ding L."/>
            <person name="Meyer R."/>
            <person name="Sabo A."/>
            <person name="Shotland Y."/>
            <person name="Sinha P."/>
            <person name="Wohldmann P.E."/>
            <person name="Cook L.L."/>
            <person name="Hickenbotham M.T."/>
            <person name="Eldred J."/>
            <person name="Williams D."/>
            <person name="Jones T.A."/>
            <person name="She X."/>
            <person name="Ciccarelli F.D."/>
            <person name="Izaurralde E."/>
            <person name="Taylor J."/>
            <person name="Schmutz J."/>
            <person name="Myers R.M."/>
            <person name="Cox D.R."/>
            <person name="Huang X."/>
            <person name="McPherson J.D."/>
            <person name="Mardis E.R."/>
            <person name="Clifton S.W."/>
            <person name="Warren W.C."/>
            <person name="Chinwalla A.T."/>
            <person name="Eddy S.R."/>
            <person name="Marra M.A."/>
            <person name="Ovcharenko I."/>
            <person name="Furey T.S."/>
            <person name="Miller W."/>
            <person name="Eichler E.E."/>
            <person name="Bork P."/>
            <person name="Suyama M."/>
            <person name="Torrents D."/>
            <person name="Waterston R.H."/>
            <person name="Wilson R.K."/>
        </authorList>
    </citation>
    <scope>NUCLEOTIDE SEQUENCE [LARGE SCALE GENOMIC DNA]</scope>
</reference>
<protein>
    <recommendedName>
        <fullName>Double homeobox protein 4-like protein 7</fullName>
    </recommendedName>
</protein>
<proteinExistence type="inferred from homology"/>
<feature type="chain" id="PRO_0000405255" description="Double homeobox protein 4-like protein 7">
    <location>
        <begin position="1"/>
        <end position="424"/>
    </location>
</feature>
<feature type="DNA-binding region" description="Homeobox 1" evidence="2">
    <location>
        <begin position="19"/>
        <end position="78"/>
    </location>
</feature>
<feature type="DNA-binding region" description="Homeobox 2" evidence="2">
    <location>
        <begin position="94"/>
        <end position="153"/>
    </location>
</feature>
<feature type="region of interest" description="Disordered" evidence="3">
    <location>
        <begin position="1"/>
        <end position="24"/>
    </location>
</feature>
<feature type="region of interest" description="Disordered" evidence="3">
    <location>
        <begin position="72"/>
        <end position="102"/>
    </location>
</feature>
<feature type="region of interest" description="Disordered" evidence="3">
    <location>
        <begin position="148"/>
        <end position="167"/>
    </location>
</feature>
<feature type="region of interest" description="Disordered" evidence="3">
    <location>
        <begin position="218"/>
        <end position="362"/>
    </location>
</feature>
<feature type="region of interest" description="Disordered" evidence="3">
    <location>
        <begin position="388"/>
        <end position="414"/>
    </location>
</feature>
<feature type="compositionally biased region" description="Polar residues" evidence="3">
    <location>
        <begin position="1"/>
        <end position="10"/>
    </location>
</feature>
<feature type="compositionally biased region" description="Basic and acidic residues" evidence="3">
    <location>
        <begin position="265"/>
        <end position="274"/>
    </location>
</feature>
<feature type="compositionally biased region" description="Low complexity" evidence="3">
    <location>
        <begin position="278"/>
        <end position="302"/>
    </location>
</feature>
<feature type="compositionally biased region" description="Low complexity" evidence="3">
    <location>
        <begin position="319"/>
        <end position="329"/>
    </location>
</feature>
<gene>
    <name type="primary">DUX4L7</name>
</gene>
<comment type="function">
    <text evidence="1">May be involved in transcriptional regulation.</text>
</comment>
<comment type="subcellular location">
    <subcellularLocation>
        <location evidence="2">Nucleus</location>
    </subcellularLocation>
</comment>
<evidence type="ECO:0000250" key="1"/>
<evidence type="ECO:0000255" key="2">
    <source>
        <dbReference type="PROSITE-ProRule" id="PRU00108"/>
    </source>
</evidence>
<evidence type="ECO:0000256" key="3">
    <source>
        <dbReference type="SAM" id="MobiDB-lite"/>
    </source>
</evidence>
<keyword id="KW-0238">DNA-binding</keyword>
<keyword id="KW-0371">Homeobox</keyword>
<keyword id="KW-0539">Nucleus</keyword>
<keyword id="KW-1185">Reference proteome</keyword>
<keyword id="KW-0677">Repeat</keyword>
<keyword id="KW-0804">Transcription</keyword>
<keyword id="KW-0805">Transcription regulation</keyword>
<sequence length="424" mass="44926">MALPTPSDSTLPAEARGRGRRRRLVWTPSQSEALRACFERNPYPGIATRERLAQAIGIPEPRVQIWFQNERSRQLRQHRRESRPWPGRRGPPEGRRKRTAVTGSQTALLLRAFEKDRFPGIAAREELARETGLPESRIQIWFQNRRARHPGQGGRAPAQAGGLCSAAPGGGHPAPSWVAFAHTGAWGTGLPAPHVPCAPGALPQGAFVSQAARAAPALQPSQAAPAEGVSQPAPARGDFAYAAPAPPDGALSHPQAPRWPPHPGKSREDRDPQRDGLPGPCAVAQPGPAQAGPQGQGVLAPPTSQGSPWWGWGRGPQVAGAAWEPQAGAAPPPQPAPPDASASARQGQMQGIPAPSQALQEPAPWSALPCGLLLDELLASPEFLQQAQPLLETEAPGELEASEEAASLEAPLSEEEYRALLEEL</sequence>
<organism>
    <name type="scientific">Homo sapiens</name>
    <name type="common">Human</name>
    <dbReference type="NCBI Taxonomy" id="9606"/>
    <lineage>
        <taxon>Eukaryota</taxon>
        <taxon>Metazoa</taxon>
        <taxon>Chordata</taxon>
        <taxon>Craniata</taxon>
        <taxon>Vertebrata</taxon>
        <taxon>Euteleostomi</taxon>
        <taxon>Mammalia</taxon>
        <taxon>Eutheria</taxon>
        <taxon>Euarchontoglires</taxon>
        <taxon>Primates</taxon>
        <taxon>Haplorrhini</taxon>
        <taxon>Catarrhini</taxon>
        <taxon>Hominidae</taxon>
        <taxon>Homo</taxon>
    </lineage>
</organism>
<name>DU4L7_HUMAN</name>
<accession>P0CJ90</accession>